<dbReference type="EMBL" id="AE017194">
    <property type="protein sequence ID" value="AAS42707.1"/>
    <property type="molecule type" value="Genomic_DNA"/>
</dbReference>
<dbReference type="SMR" id="Q732V8"/>
<dbReference type="KEGG" id="bca:BCE_3802"/>
<dbReference type="HOGENOM" id="CLU_004131_4_1_9"/>
<dbReference type="Proteomes" id="UP000002527">
    <property type="component" value="Chromosome"/>
</dbReference>
<dbReference type="GO" id="GO:0032300">
    <property type="term" value="C:mismatch repair complex"/>
    <property type="evidence" value="ECO:0007669"/>
    <property type="project" value="InterPro"/>
</dbReference>
<dbReference type="GO" id="GO:0005524">
    <property type="term" value="F:ATP binding"/>
    <property type="evidence" value="ECO:0007669"/>
    <property type="project" value="InterPro"/>
</dbReference>
<dbReference type="GO" id="GO:0016887">
    <property type="term" value="F:ATP hydrolysis activity"/>
    <property type="evidence" value="ECO:0007669"/>
    <property type="project" value="InterPro"/>
</dbReference>
<dbReference type="GO" id="GO:0140664">
    <property type="term" value="F:ATP-dependent DNA damage sensor activity"/>
    <property type="evidence" value="ECO:0007669"/>
    <property type="project" value="InterPro"/>
</dbReference>
<dbReference type="GO" id="GO:0030983">
    <property type="term" value="F:mismatched DNA binding"/>
    <property type="evidence" value="ECO:0007669"/>
    <property type="project" value="InterPro"/>
</dbReference>
<dbReference type="GO" id="GO:0006298">
    <property type="term" value="P:mismatch repair"/>
    <property type="evidence" value="ECO:0007669"/>
    <property type="project" value="UniProtKB-UniRule"/>
</dbReference>
<dbReference type="CDD" id="cd16926">
    <property type="entry name" value="HATPase_MutL-MLH-PMS-like"/>
    <property type="match status" value="1"/>
</dbReference>
<dbReference type="CDD" id="cd00782">
    <property type="entry name" value="MutL_Trans"/>
    <property type="match status" value="1"/>
</dbReference>
<dbReference type="FunFam" id="3.30.1370.100:FF:000004">
    <property type="entry name" value="DNA mismatch repair endonuclease MutL"/>
    <property type="match status" value="1"/>
</dbReference>
<dbReference type="FunFam" id="3.30.230.10:FF:000036">
    <property type="entry name" value="DNA mismatch repair endonuclease MutL"/>
    <property type="match status" value="1"/>
</dbReference>
<dbReference type="FunFam" id="3.30.565.10:FF:000003">
    <property type="entry name" value="DNA mismatch repair endonuclease MutL"/>
    <property type="match status" value="1"/>
</dbReference>
<dbReference type="Gene3D" id="3.30.230.10">
    <property type="match status" value="1"/>
</dbReference>
<dbReference type="Gene3D" id="3.30.565.10">
    <property type="entry name" value="Histidine kinase-like ATPase, C-terminal domain"/>
    <property type="match status" value="1"/>
</dbReference>
<dbReference type="Gene3D" id="3.30.1540.20">
    <property type="entry name" value="MutL, C-terminal domain, dimerisation subdomain"/>
    <property type="match status" value="1"/>
</dbReference>
<dbReference type="Gene3D" id="3.30.1370.100">
    <property type="entry name" value="MutL, C-terminal domain, regulatory subdomain"/>
    <property type="match status" value="1"/>
</dbReference>
<dbReference type="HAMAP" id="MF_00149">
    <property type="entry name" value="DNA_mis_repair"/>
    <property type="match status" value="1"/>
</dbReference>
<dbReference type="InterPro" id="IPR014762">
    <property type="entry name" value="DNA_mismatch_repair_CS"/>
</dbReference>
<dbReference type="InterPro" id="IPR020667">
    <property type="entry name" value="DNA_mismatch_repair_MutL"/>
</dbReference>
<dbReference type="InterPro" id="IPR013507">
    <property type="entry name" value="DNA_mismatch_S5_2-like"/>
</dbReference>
<dbReference type="InterPro" id="IPR036890">
    <property type="entry name" value="HATPase_C_sf"/>
</dbReference>
<dbReference type="InterPro" id="IPR002099">
    <property type="entry name" value="MutL/Mlh/PMS"/>
</dbReference>
<dbReference type="InterPro" id="IPR038973">
    <property type="entry name" value="MutL/Mlh/Pms-like"/>
</dbReference>
<dbReference type="InterPro" id="IPR014790">
    <property type="entry name" value="MutL_C"/>
</dbReference>
<dbReference type="InterPro" id="IPR042120">
    <property type="entry name" value="MutL_C_dimsub"/>
</dbReference>
<dbReference type="InterPro" id="IPR042121">
    <property type="entry name" value="MutL_C_regsub"/>
</dbReference>
<dbReference type="InterPro" id="IPR037198">
    <property type="entry name" value="MutL_C_sf"/>
</dbReference>
<dbReference type="InterPro" id="IPR020568">
    <property type="entry name" value="Ribosomal_Su5_D2-typ_SF"/>
</dbReference>
<dbReference type="InterPro" id="IPR014721">
    <property type="entry name" value="Ribsml_uS5_D2-typ_fold_subgr"/>
</dbReference>
<dbReference type="NCBIfam" id="TIGR00585">
    <property type="entry name" value="mutl"/>
    <property type="match status" value="1"/>
</dbReference>
<dbReference type="NCBIfam" id="NF000950">
    <property type="entry name" value="PRK00095.1-3"/>
    <property type="match status" value="1"/>
</dbReference>
<dbReference type="PANTHER" id="PTHR10073">
    <property type="entry name" value="DNA MISMATCH REPAIR PROTEIN MLH, PMS, MUTL"/>
    <property type="match status" value="1"/>
</dbReference>
<dbReference type="PANTHER" id="PTHR10073:SF12">
    <property type="entry name" value="DNA MISMATCH REPAIR PROTEIN MLH1"/>
    <property type="match status" value="1"/>
</dbReference>
<dbReference type="Pfam" id="PF01119">
    <property type="entry name" value="DNA_mis_repair"/>
    <property type="match status" value="1"/>
</dbReference>
<dbReference type="Pfam" id="PF13589">
    <property type="entry name" value="HATPase_c_3"/>
    <property type="match status" value="1"/>
</dbReference>
<dbReference type="Pfam" id="PF08676">
    <property type="entry name" value="MutL_C"/>
    <property type="match status" value="1"/>
</dbReference>
<dbReference type="SMART" id="SM01340">
    <property type="entry name" value="DNA_mis_repair"/>
    <property type="match status" value="1"/>
</dbReference>
<dbReference type="SMART" id="SM00853">
    <property type="entry name" value="MutL_C"/>
    <property type="match status" value="1"/>
</dbReference>
<dbReference type="SUPFAM" id="SSF55874">
    <property type="entry name" value="ATPase domain of HSP90 chaperone/DNA topoisomerase II/histidine kinase"/>
    <property type="match status" value="1"/>
</dbReference>
<dbReference type="SUPFAM" id="SSF118116">
    <property type="entry name" value="DNA mismatch repair protein MutL"/>
    <property type="match status" value="1"/>
</dbReference>
<dbReference type="SUPFAM" id="SSF54211">
    <property type="entry name" value="Ribosomal protein S5 domain 2-like"/>
    <property type="match status" value="1"/>
</dbReference>
<dbReference type="PROSITE" id="PS00058">
    <property type="entry name" value="DNA_MISMATCH_REPAIR_1"/>
    <property type="match status" value="1"/>
</dbReference>
<organism>
    <name type="scientific">Bacillus cereus (strain ATCC 10987 / NRS 248)</name>
    <dbReference type="NCBI Taxonomy" id="222523"/>
    <lineage>
        <taxon>Bacteria</taxon>
        <taxon>Bacillati</taxon>
        <taxon>Bacillota</taxon>
        <taxon>Bacilli</taxon>
        <taxon>Bacillales</taxon>
        <taxon>Bacillaceae</taxon>
        <taxon>Bacillus</taxon>
        <taxon>Bacillus cereus group</taxon>
    </lineage>
</organism>
<sequence>MGKIRKLDDQLSNLIAAGEVVERPASVVKELVENSIDANSTSIEIHLEEAGLSKIRIIDNGDGIAEEDCIVAFERHATSKIKDENDLFRIRTLGFRGEALPSIASVSELELITSTGDAPGTHLIIKGGDIIKQEKTASRKGTDITVQNLFFNTPARLKYMKTIHTELGNITDIVYRIAMSHPEVSLKLFHNEKKLLHTSGNGDVRQVLASIYSIQVAKKLVPIEAESLDFTIKGYVTLPEVTRASRNYMSTIVNGRYVRNFVLMKAIQQGYHTLLPVGRYPIGFLSIEMDPMLVDVNVHPAKLEVRFSKEQELLKLIEETLQAAFKKIQLIPDAGVTTKKKEKDESVQEQFKFEHAKPKEPSMPEIILPTGMDEKQEEPLAVKQPAQLWQPPKQEWQPPQSLVREEQSWQPSTKSIIEEPIREEKSWDSNDEDFELEELEEEVQEIKEIEMNGNDLPPLYPIGQMHGTYIFAQNDKGLYMIDQHAAQERINYEYFRDKVGRVAQEVQELLVPYRIDLSLTEFLRVEEQLEELKKVGLFLEQFGHQSFIVRSHPTWFPKGQETEIIDEMMEQVVKLKKVDIKKLREEAAIMMSCKASIKANQYLTNDQIFALLEELRTTTNPYTCPHGRPILVHHSTYELEKMFKRVM</sequence>
<feature type="chain" id="PRO_1000009978" description="DNA mismatch repair protein MutL">
    <location>
        <begin position="1"/>
        <end position="647"/>
    </location>
</feature>
<name>MUTL_BACC1</name>
<proteinExistence type="inferred from homology"/>
<comment type="function">
    <text evidence="1">This protein is involved in the repair of mismatches in DNA. It is required for dam-dependent methyl-directed DNA mismatch repair. May act as a 'molecular matchmaker', a protein that promotes the formation of a stable complex between two or more DNA-binding proteins in an ATP-dependent manner without itself being part of a final effector complex.</text>
</comment>
<comment type="similarity">
    <text evidence="1">Belongs to the DNA mismatch repair MutL/HexB family.</text>
</comment>
<protein>
    <recommendedName>
        <fullName evidence="1">DNA mismatch repair protein MutL</fullName>
    </recommendedName>
</protein>
<accession>Q732V8</accession>
<reference key="1">
    <citation type="journal article" date="2004" name="Nucleic Acids Res.">
        <title>The genome sequence of Bacillus cereus ATCC 10987 reveals metabolic adaptations and a large plasmid related to Bacillus anthracis pXO1.</title>
        <authorList>
            <person name="Rasko D.A."/>
            <person name="Ravel J."/>
            <person name="Oekstad O.A."/>
            <person name="Helgason E."/>
            <person name="Cer R.Z."/>
            <person name="Jiang L."/>
            <person name="Shores K.A."/>
            <person name="Fouts D.E."/>
            <person name="Tourasse N.J."/>
            <person name="Angiuoli S.V."/>
            <person name="Kolonay J.F."/>
            <person name="Nelson W.C."/>
            <person name="Kolstoe A.-B."/>
            <person name="Fraser C.M."/>
            <person name="Read T.D."/>
        </authorList>
    </citation>
    <scope>NUCLEOTIDE SEQUENCE [LARGE SCALE GENOMIC DNA]</scope>
    <source>
        <strain>ATCC 10987 / NRS 248</strain>
    </source>
</reference>
<gene>
    <name evidence="1" type="primary">mutL</name>
    <name type="ordered locus">BCE_3802</name>
</gene>
<keyword id="KW-0227">DNA damage</keyword>
<keyword id="KW-0234">DNA repair</keyword>
<evidence type="ECO:0000255" key="1">
    <source>
        <dbReference type="HAMAP-Rule" id="MF_00149"/>
    </source>
</evidence>